<name>AROB_JANSC</name>
<gene>
    <name evidence="1" type="primary">aroB</name>
    <name type="ordered locus">Jann_2487</name>
</gene>
<proteinExistence type="inferred from homology"/>
<keyword id="KW-0028">Amino-acid biosynthesis</keyword>
<keyword id="KW-0057">Aromatic amino acid biosynthesis</keyword>
<keyword id="KW-0170">Cobalt</keyword>
<keyword id="KW-0963">Cytoplasm</keyword>
<keyword id="KW-0456">Lyase</keyword>
<keyword id="KW-0479">Metal-binding</keyword>
<keyword id="KW-0520">NAD</keyword>
<keyword id="KW-0547">Nucleotide-binding</keyword>
<keyword id="KW-1185">Reference proteome</keyword>
<keyword id="KW-0862">Zinc</keyword>
<evidence type="ECO:0000255" key="1">
    <source>
        <dbReference type="HAMAP-Rule" id="MF_00110"/>
    </source>
</evidence>
<comment type="function">
    <text evidence="1">Catalyzes the conversion of 3-deoxy-D-arabino-heptulosonate 7-phosphate (DAHP) to dehydroquinate (DHQ).</text>
</comment>
<comment type="catalytic activity">
    <reaction evidence="1">
        <text>7-phospho-2-dehydro-3-deoxy-D-arabino-heptonate = 3-dehydroquinate + phosphate</text>
        <dbReference type="Rhea" id="RHEA:21968"/>
        <dbReference type="ChEBI" id="CHEBI:32364"/>
        <dbReference type="ChEBI" id="CHEBI:43474"/>
        <dbReference type="ChEBI" id="CHEBI:58394"/>
        <dbReference type="EC" id="4.2.3.4"/>
    </reaction>
</comment>
<comment type="cofactor">
    <cofactor evidence="1">
        <name>Co(2+)</name>
        <dbReference type="ChEBI" id="CHEBI:48828"/>
    </cofactor>
    <cofactor evidence="1">
        <name>Zn(2+)</name>
        <dbReference type="ChEBI" id="CHEBI:29105"/>
    </cofactor>
    <text evidence="1">Binds 1 divalent metal cation per subunit. Can use either Co(2+) or Zn(2+).</text>
</comment>
<comment type="cofactor">
    <cofactor evidence="1">
        <name>NAD(+)</name>
        <dbReference type="ChEBI" id="CHEBI:57540"/>
    </cofactor>
</comment>
<comment type="pathway">
    <text evidence="1">Metabolic intermediate biosynthesis; chorismate biosynthesis; chorismate from D-erythrose 4-phosphate and phosphoenolpyruvate: step 2/7.</text>
</comment>
<comment type="subcellular location">
    <subcellularLocation>
        <location evidence="1">Cytoplasm</location>
    </subcellularLocation>
</comment>
<comment type="similarity">
    <text evidence="1">Belongs to the sugar phosphate cyclases superfamily. Dehydroquinate synthase family.</text>
</comment>
<reference key="1">
    <citation type="submission" date="2006-02" db="EMBL/GenBank/DDBJ databases">
        <title>Complete sequence of chromosome of Jannaschia sp. CCS1.</title>
        <authorList>
            <consortium name="US DOE Joint Genome Institute"/>
            <person name="Copeland A."/>
            <person name="Lucas S."/>
            <person name="Lapidus A."/>
            <person name="Barry K."/>
            <person name="Detter J.C."/>
            <person name="Glavina del Rio T."/>
            <person name="Hammon N."/>
            <person name="Israni S."/>
            <person name="Pitluck S."/>
            <person name="Brettin T."/>
            <person name="Bruce D."/>
            <person name="Han C."/>
            <person name="Tapia R."/>
            <person name="Gilna P."/>
            <person name="Chertkov O."/>
            <person name="Saunders E."/>
            <person name="Schmutz J."/>
            <person name="Larimer F."/>
            <person name="Land M."/>
            <person name="Kyrpides N."/>
            <person name="Lykidis A."/>
            <person name="Moran M.A."/>
            <person name="Belas R."/>
            <person name="Ye W."/>
            <person name="Buchan A."/>
            <person name="Gonzalez J.M."/>
            <person name="Schell M.A."/>
            <person name="Richardson P."/>
        </authorList>
    </citation>
    <scope>NUCLEOTIDE SEQUENCE [LARGE SCALE GENOMIC DNA]</scope>
    <source>
        <strain>CCS1</strain>
    </source>
</reference>
<protein>
    <recommendedName>
        <fullName evidence="1">3-dehydroquinate synthase</fullName>
        <shortName evidence="1">DHQS</shortName>
        <ecNumber evidence="1">4.2.3.4</ecNumber>
    </recommendedName>
</protein>
<sequence length="370" mass="39069">MSDTVRVELGARAYDVEIGAGLIASAGARIAPLLSRPKVWIVTEETVAALHMDALRAGLDAANIASEALVLPPGEATKSWPHLQRIADWLLSERVERADIVIAFGGGVIGDLAGFAAAIHRRGIRFVQIPTSLLAQVDSSVGGKTGINAPQGKNLIGAFHQPSLVLADIDVLGTLMPRDFLAGYGEVAKYGMLGDAPFFEWLEANGPAMAKGDPALRQEAVRRSVQMKADIVARDETEQGDRALLNLGHTFCHALEAATGYSDRLLHGEGVAIGCALAFELSARLGLCSQEDPSRVRAHLAAMGTRRDLSDIPGDLPDADALITLMGQDKKVVAGQLRFILARGIGHAFVTADVPTDAVKALLTDALAGR</sequence>
<organism>
    <name type="scientific">Jannaschia sp. (strain CCS1)</name>
    <dbReference type="NCBI Taxonomy" id="290400"/>
    <lineage>
        <taxon>Bacteria</taxon>
        <taxon>Pseudomonadati</taxon>
        <taxon>Pseudomonadota</taxon>
        <taxon>Alphaproteobacteria</taxon>
        <taxon>Rhodobacterales</taxon>
        <taxon>Roseobacteraceae</taxon>
        <taxon>Jannaschia</taxon>
    </lineage>
</organism>
<feature type="chain" id="PRO_1000094535" description="3-dehydroquinate synthase">
    <location>
        <begin position="1"/>
        <end position="370"/>
    </location>
</feature>
<feature type="binding site" evidence="1">
    <location>
        <begin position="107"/>
        <end position="111"/>
    </location>
    <ligand>
        <name>NAD(+)</name>
        <dbReference type="ChEBI" id="CHEBI:57540"/>
    </ligand>
</feature>
<feature type="binding site" evidence="1">
    <location>
        <begin position="131"/>
        <end position="132"/>
    </location>
    <ligand>
        <name>NAD(+)</name>
        <dbReference type="ChEBI" id="CHEBI:57540"/>
    </ligand>
</feature>
<feature type="binding site" evidence="1">
    <location>
        <position position="144"/>
    </location>
    <ligand>
        <name>NAD(+)</name>
        <dbReference type="ChEBI" id="CHEBI:57540"/>
    </ligand>
</feature>
<feature type="binding site" evidence="1">
    <location>
        <position position="153"/>
    </location>
    <ligand>
        <name>NAD(+)</name>
        <dbReference type="ChEBI" id="CHEBI:57540"/>
    </ligand>
</feature>
<feature type="binding site" evidence="1">
    <location>
        <position position="186"/>
    </location>
    <ligand>
        <name>Zn(2+)</name>
        <dbReference type="ChEBI" id="CHEBI:29105"/>
    </ligand>
</feature>
<feature type="binding site" evidence="1">
    <location>
        <position position="249"/>
    </location>
    <ligand>
        <name>Zn(2+)</name>
        <dbReference type="ChEBI" id="CHEBI:29105"/>
    </ligand>
</feature>
<feature type="binding site" evidence="1">
    <location>
        <position position="267"/>
    </location>
    <ligand>
        <name>Zn(2+)</name>
        <dbReference type="ChEBI" id="CHEBI:29105"/>
    </ligand>
</feature>
<dbReference type="EC" id="4.2.3.4" evidence="1"/>
<dbReference type="EMBL" id="CP000264">
    <property type="protein sequence ID" value="ABD55404.1"/>
    <property type="molecule type" value="Genomic_DNA"/>
</dbReference>
<dbReference type="RefSeq" id="WP_011455608.1">
    <property type="nucleotide sequence ID" value="NC_007802.1"/>
</dbReference>
<dbReference type="SMR" id="Q28PF8"/>
<dbReference type="STRING" id="290400.Jann_2487"/>
<dbReference type="KEGG" id="jan:Jann_2487"/>
<dbReference type="eggNOG" id="COG0337">
    <property type="taxonomic scope" value="Bacteria"/>
</dbReference>
<dbReference type="HOGENOM" id="CLU_001201_0_2_5"/>
<dbReference type="OrthoDB" id="9806583at2"/>
<dbReference type="UniPathway" id="UPA00053">
    <property type="reaction ID" value="UER00085"/>
</dbReference>
<dbReference type="Proteomes" id="UP000008326">
    <property type="component" value="Chromosome"/>
</dbReference>
<dbReference type="GO" id="GO:0005737">
    <property type="term" value="C:cytoplasm"/>
    <property type="evidence" value="ECO:0007669"/>
    <property type="project" value="UniProtKB-SubCell"/>
</dbReference>
<dbReference type="GO" id="GO:0003856">
    <property type="term" value="F:3-dehydroquinate synthase activity"/>
    <property type="evidence" value="ECO:0007669"/>
    <property type="project" value="UniProtKB-UniRule"/>
</dbReference>
<dbReference type="GO" id="GO:0046872">
    <property type="term" value="F:metal ion binding"/>
    <property type="evidence" value="ECO:0007669"/>
    <property type="project" value="UniProtKB-KW"/>
</dbReference>
<dbReference type="GO" id="GO:0000166">
    <property type="term" value="F:nucleotide binding"/>
    <property type="evidence" value="ECO:0007669"/>
    <property type="project" value="UniProtKB-KW"/>
</dbReference>
<dbReference type="GO" id="GO:0008652">
    <property type="term" value="P:amino acid biosynthetic process"/>
    <property type="evidence" value="ECO:0007669"/>
    <property type="project" value="UniProtKB-KW"/>
</dbReference>
<dbReference type="GO" id="GO:0009073">
    <property type="term" value="P:aromatic amino acid family biosynthetic process"/>
    <property type="evidence" value="ECO:0007669"/>
    <property type="project" value="UniProtKB-KW"/>
</dbReference>
<dbReference type="GO" id="GO:0009423">
    <property type="term" value="P:chorismate biosynthetic process"/>
    <property type="evidence" value="ECO:0007669"/>
    <property type="project" value="UniProtKB-UniRule"/>
</dbReference>
<dbReference type="CDD" id="cd08195">
    <property type="entry name" value="DHQS"/>
    <property type="match status" value="1"/>
</dbReference>
<dbReference type="FunFam" id="3.40.50.1970:FF:000001">
    <property type="entry name" value="3-dehydroquinate synthase"/>
    <property type="match status" value="1"/>
</dbReference>
<dbReference type="Gene3D" id="3.40.50.1970">
    <property type="match status" value="1"/>
</dbReference>
<dbReference type="Gene3D" id="1.20.1090.10">
    <property type="entry name" value="Dehydroquinate synthase-like - alpha domain"/>
    <property type="match status" value="1"/>
</dbReference>
<dbReference type="HAMAP" id="MF_00110">
    <property type="entry name" value="DHQ_synthase"/>
    <property type="match status" value="1"/>
</dbReference>
<dbReference type="InterPro" id="IPR050071">
    <property type="entry name" value="Dehydroquinate_synthase"/>
</dbReference>
<dbReference type="InterPro" id="IPR016037">
    <property type="entry name" value="DHQ_synth_AroB"/>
</dbReference>
<dbReference type="InterPro" id="IPR030963">
    <property type="entry name" value="DHQ_synth_fam"/>
</dbReference>
<dbReference type="InterPro" id="IPR030960">
    <property type="entry name" value="DHQS/DOIS_N"/>
</dbReference>
<dbReference type="InterPro" id="IPR056179">
    <property type="entry name" value="DHQS_C"/>
</dbReference>
<dbReference type="NCBIfam" id="TIGR01357">
    <property type="entry name" value="aroB"/>
    <property type="match status" value="1"/>
</dbReference>
<dbReference type="PANTHER" id="PTHR43622">
    <property type="entry name" value="3-DEHYDROQUINATE SYNTHASE"/>
    <property type="match status" value="1"/>
</dbReference>
<dbReference type="PANTHER" id="PTHR43622:SF7">
    <property type="entry name" value="3-DEHYDROQUINATE SYNTHASE, CHLOROPLASTIC"/>
    <property type="match status" value="1"/>
</dbReference>
<dbReference type="Pfam" id="PF01761">
    <property type="entry name" value="DHQ_synthase"/>
    <property type="match status" value="1"/>
</dbReference>
<dbReference type="Pfam" id="PF24621">
    <property type="entry name" value="DHQS_C"/>
    <property type="match status" value="1"/>
</dbReference>
<dbReference type="PIRSF" id="PIRSF001455">
    <property type="entry name" value="DHQ_synth"/>
    <property type="match status" value="1"/>
</dbReference>
<dbReference type="SUPFAM" id="SSF56796">
    <property type="entry name" value="Dehydroquinate synthase-like"/>
    <property type="match status" value="1"/>
</dbReference>
<accession>Q28PF8</accession>